<protein>
    <recommendedName>
        <fullName evidence="1">Exodeoxyribonuclease 7 small subunit</fullName>
        <ecNumber evidence="1">3.1.11.6</ecNumber>
    </recommendedName>
    <alternativeName>
        <fullName evidence="1">Exodeoxyribonuclease VII small subunit</fullName>
        <shortName evidence="1">Exonuclease VII small subunit</shortName>
    </alternativeName>
</protein>
<proteinExistence type="inferred from homology"/>
<reference key="1">
    <citation type="submission" date="2007-09" db="EMBL/GenBank/DDBJ databases">
        <title>Complete genome sequencing of Rickettsia bellii.</title>
        <authorList>
            <person name="Madan A."/>
            <person name="Lee H."/>
            <person name="Madan A."/>
            <person name="Yoon J.-G."/>
            <person name="Ryu G.-Y."/>
            <person name="Dasch G."/>
            <person name="Ereemeva M."/>
        </authorList>
    </citation>
    <scope>NUCLEOTIDE SEQUENCE [LARGE SCALE GENOMIC DNA]</scope>
    <source>
        <strain>OSU 85-389</strain>
    </source>
</reference>
<keyword id="KW-0963">Cytoplasm</keyword>
<keyword id="KW-0269">Exonuclease</keyword>
<keyword id="KW-0378">Hydrolase</keyword>
<keyword id="KW-0540">Nuclease</keyword>
<sequence length="80" mass="9117">MTTNKNLDENISFEEALSELEEIVKKIDNGQETLEAAVNSFERGILLKNHCEKKLKEARLKIEKITKLADSTITLEEVEV</sequence>
<organism>
    <name type="scientific">Rickettsia bellii (strain OSU 85-389)</name>
    <dbReference type="NCBI Taxonomy" id="391896"/>
    <lineage>
        <taxon>Bacteria</taxon>
        <taxon>Pseudomonadati</taxon>
        <taxon>Pseudomonadota</taxon>
        <taxon>Alphaproteobacteria</taxon>
        <taxon>Rickettsiales</taxon>
        <taxon>Rickettsiaceae</taxon>
        <taxon>Rickettsieae</taxon>
        <taxon>Rickettsia</taxon>
        <taxon>belli group</taxon>
    </lineage>
</organism>
<dbReference type="EC" id="3.1.11.6" evidence="1"/>
<dbReference type="EMBL" id="CP000849">
    <property type="protein sequence ID" value="ABV79323.1"/>
    <property type="molecule type" value="Genomic_DNA"/>
</dbReference>
<dbReference type="RefSeq" id="WP_011477434.1">
    <property type="nucleotide sequence ID" value="NC_009883.1"/>
</dbReference>
<dbReference type="SMR" id="A8GWU6"/>
<dbReference type="KEGG" id="rbo:A1I_04940"/>
<dbReference type="HOGENOM" id="CLU_145918_0_3_5"/>
<dbReference type="GO" id="GO:0005829">
    <property type="term" value="C:cytosol"/>
    <property type="evidence" value="ECO:0007669"/>
    <property type="project" value="TreeGrafter"/>
</dbReference>
<dbReference type="GO" id="GO:0009318">
    <property type="term" value="C:exodeoxyribonuclease VII complex"/>
    <property type="evidence" value="ECO:0007669"/>
    <property type="project" value="InterPro"/>
</dbReference>
<dbReference type="GO" id="GO:0008855">
    <property type="term" value="F:exodeoxyribonuclease VII activity"/>
    <property type="evidence" value="ECO:0007669"/>
    <property type="project" value="UniProtKB-UniRule"/>
</dbReference>
<dbReference type="GO" id="GO:0006308">
    <property type="term" value="P:DNA catabolic process"/>
    <property type="evidence" value="ECO:0007669"/>
    <property type="project" value="UniProtKB-UniRule"/>
</dbReference>
<dbReference type="Gene3D" id="1.10.287.1040">
    <property type="entry name" value="Exonuclease VII, small subunit"/>
    <property type="match status" value="1"/>
</dbReference>
<dbReference type="HAMAP" id="MF_00337">
    <property type="entry name" value="Exonuc_7_S"/>
    <property type="match status" value="1"/>
</dbReference>
<dbReference type="InterPro" id="IPR003761">
    <property type="entry name" value="Exonuc_VII_S"/>
</dbReference>
<dbReference type="InterPro" id="IPR037004">
    <property type="entry name" value="Exonuc_VII_ssu_sf"/>
</dbReference>
<dbReference type="NCBIfam" id="NF002140">
    <property type="entry name" value="PRK00977.1-4"/>
    <property type="match status" value="1"/>
</dbReference>
<dbReference type="NCBIfam" id="TIGR01280">
    <property type="entry name" value="xseB"/>
    <property type="match status" value="1"/>
</dbReference>
<dbReference type="PANTHER" id="PTHR34137">
    <property type="entry name" value="EXODEOXYRIBONUCLEASE 7 SMALL SUBUNIT"/>
    <property type="match status" value="1"/>
</dbReference>
<dbReference type="PANTHER" id="PTHR34137:SF1">
    <property type="entry name" value="EXODEOXYRIBONUCLEASE 7 SMALL SUBUNIT"/>
    <property type="match status" value="1"/>
</dbReference>
<dbReference type="Pfam" id="PF02609">
    <property type="entry name" value="Exonuc_VII_S"/>
    <property type="match status" value="1"/>
</dbReference>
<dbReference type="PIRSF" id="PIRSF006488">
    <property type="entry name" value="Exonuc_VII_S"/>
    <property type="match status" value="1"/>
</dbReference>
<dbReference type="SUPFAM" id="SSF116842">
    <property type="entry name" value="XseB-like"/>
    <property type="match status" value="1"/>
</dbReference>
<feature type="chain" id="PRO_1000019590" description="Exodeoxyribonuclease 7 small subunit">
    <location>
        <begin position="1"/>
        <end position="80"/>
    </location>
</feature>
<gene>
    <name evidence="1" type="primary">xseB</name>
    <name type="ordered locus">A1I_04940</name>
</gene>
<evidence type="ECO:0000255" key="1">
    <source>
        <dbReference type="HAMAP-Rule" id="MF_00337"/>
    </source>
</evidence>
<accession>A8GWU6</accession>
<name>EX7S_RICB8</name>
<comment type="function">
    <text evidence="1">Bidirectionally degrades single-stranded DNA into large acid-insoluble oligonucleotides, which are then degraded further into small acid-soluble oligonucleotides.</text>
</comment>
<comment type="catalytic activity">
    <reaction evidence="1">
        <text>Exonucleolytic cleavage in either 5'- to 3'- or 3'- to 5'-direction to yield nucleoside 5'-phosphates.</text>
        <dbReference type="EC" id="3.1.11.6"/>
    </reaction>
</comment>
<comment type="subunit">
    <text evidence="1">Heterooligomer composed of large and small subunits.</text>
</comment>
<comment type="subcellular location">
    <subcellularLocation>
        <location evidence="1">Cytoplasm</location>
    </subcellularLocation>
</comment>
<comment type="similarity">
    <text evidence="1">Belongs to the XseB family.</text>
</comment>